<keyword id="KW-0238">DNA-binding</keyword>
<keyword id="KW-0479">Metal-binding</keyword>
<keyword id="KW-0539">Nucleus</keyword>
<keyword id="KW-0677">Repeat</keyword>
<keyword id="KW-0862">Zinc</keyword>
<keyword id="KW-0863">Zinc-finger</keyword>
<dbReference type="EMBL" id="AF160977">
    <property type="protein sequence ID" value="AAD45720.1"/>
    <property type="molecule type" value="mRNA"/>
</dbReference>
<dbReference type="PIR" id="T48868">
    <property type="entry name" value="T48868"/>
</dbReference>
<dbReference type="GO" id="GO:0005634">
    <property type="term" value="C:nucleus"/>
    <property type="evidence" value="ECO:0007669"/>
    <property type="project" value="UniProtKB-SubCell"/>
</dbReference>
<dbReference type="GO" id="GO:0003677">
    <property type="term" value="F:DNA binding"/>
    <property type="evidence" value="ECO:0007669"/>
    <property type="project" value="UniProtKB-KW"/>
</dbReference>
<dbReference type="GO" id="GO:0003729">
    <property type="term" value="F:mRNA binding"/>
    <property type="evidence" value="ECO:0007669"/>
    <property type="project" value="UniProtKB-ARBA"/>
</dbReference>
<dbReference type="GO" id="GO:0008270">
    <property type="term" value="F:zinc ion binding"/>
    <property type="evidence" value="ECO:0007669"/>
    <property type="project" value="UniProtKB-KW"/>
</dbReference>
<dbReference type="FunFam" id="4.10.1000.10:FF:000030">
    <property type="entry name" value="CCCH type zinc finger protein"/>
    <property type="match status" value="1"/>
</dbReference>
<dbReference type="FunFam" id="4.10.1000.10:FF:000028">
    <property type="entry name" value="Zinc finger nuclease 2"/>
    <property type="match status" value="1"/>
</dbReference>
<dbReference type="Gene3D" id="2.30.30.1190">
    <property type="match status" value="1"/>
</dbReference>
<dbReference type="Gene3D" id="4.10.1000.10">
    <property type="entry name" value="Zinc finger, CCCH-type"/>
    <property type="match status" value="2"/>
</dbReference>
<dbReference type="InterPro" id="IPR050974">
    <property type="entry name" value="Plant_ZF_CCCH"/>
</dbReference>
<dbReference type="InterPro" id="IPR000571">
    <property type="entry name" value="Znf_CCCH"/>
</dbReference>
<dbReference type="InterPro" id="IPR036855">
    <property type="entry name" value="Znf_CCCH_sf"/>
</dbReference>
<dbReference type="PANTHER" id="PTHR12506">
    <property type="entry name" value="PROTEIN PHOSPHATASE RELATED"/>
    <property type="match status" value="1"/>
</dbReference>
<dbReference type="PANTHER" id="PTHR12506:SF18">
    <property type="entry name" value="ZINC FINGER CCCH DOMAIN-CONTAINING PROTEIN 33-RELATED"/>
    <property type="match status" value="1"/>
</dbReference>
<dbReference type="Pfam" id="PF00642">
    <property type="entry name" value="zf-CCCH"/>
    <property type="match status" value="5"/>
</dbReference>
<dbReference type="SMART" id="SM00356">
    <property type="entry name" value="ZnF_C3H1"/>
    <property type="match status" value="5"/>
</dbReference>
<dbReference type="SUPFAM" id="SSF90229">
    <property type="entry name" value="CCCH zinc finger"/>
    <property type="match status" value="4"/>
</dbReference>
<dbReference type="PROSITE" id="PS50103">
    <property type="entry name" value="ZF_C3H1"/>
    <property type="match status" value="5"/>
</dbReference>
<protein>
    <recommendedName>
        <fullName>Zinc finger CCCH domain-containing protein ZFN-like</fullName>
    </recommendedName>
</protein>
<feature type="chain" id="PRO_0000213921" description="Zinc finger CCCH domain-containing protein ZFN-like">
    <location>
        <begin position="1"/>
        <end position="417"/>
    </location>
</feature>
<feature type="zinc finger region" description="C3H1-type 1" evidence="2">
    <location>
        <begin position="31"/>
        <end position="58"/>
    </location>
</feature>
<feature type="zinc finger region" description="C3H1-type 2" evidence="2">
    <location>
        <begin position="75"/>
        <end position="103"/>
    </location>
</feature>
<feature type="zinc finger region" description="C3H1-type 3; degenerate" evidence="2">
    <location>
        <begin position="121"/>
        <end position="149"/>
    </location>
</feature>
<feature type="zinc finger region" description="C3H1-type 4" evidence="2">
    <location>
        <begin position="278"/>
        <end position="306"/>
    </location>
</feature>
<feature type="zinc finger region" description="C3H1-type 5" evidence="2">
    <location>
        <begin position="324"/>
        <end position="352"/>
    </location>
</feature>
<feature type="region of interest" description="Disordered" evidence="3">
    <location>
        <begin position="383"/>
        <end position="417"/>
    </location>
</feature>
<name>ZFNL_PEA</name>
<comment type="subcellular location">
    <subcellularLocation>
        <location evidence="1">Nucleus</location>
    </subcellularLocation>
</comment>
<accession>Q9SWF9</accession>
<organism>
    <name type="scientific">Pisum sativum</name>
    <name type="common">Garden pea</name>
    <name type="synonym">Lathyrus oleraceus</name>
    <dbReference type="NCBI Taxonomy" id="3888"/>
    <lineage>
        <taxon>Eukaryota</taxon>
        <taxon>Viridiplantae</taxon>
        <taxon>Streptophyta</taxon>
        <taxon>Embryophyta</taxon>
        <taxon>Tracheophyta</taxon>
        <taxon>Spermatophyta</taxon>
        <taxon>Magnoliopsida</taxon>
        <taxon>eudicotyledons</taxon>
        <taxon>Gunneridae</taxon>
        <taxon>Pentapetalae</taxon>
        <taxon>rosids</taxon>
        <taxon>fabids</taxon>
        <taxon>Fabales</taxon>
        <taxon>Fabaceae</taxon>
        <taxon>Papilionoideae</taxon>
        <taxon>50 kb inversion clade</taxon>
        <taxon>NPAAA clade</taxon>
        <taxon>Hologalegina</taxon>
        <taxon>IRL clade</taxon>
        <taxon>Fabeae</taxon>
        <taxon>Pisum</taxon>
    </lineage>
</organism>
<reference key="1">
    <citation type="submission" date="1999-06" db="EMBL/GenBank/DDBJ databases">
        <title>Characterization of cDNA clone encoding a novel zinc finger protein which putatively interacts with pea phytochrome.</title>
        <authorList>
            <person name="Kang J.-G."/>
            <person name="Park C.-M."/>
        </authorList>
    </citation>
    <scope>NUCLEOTIDE SEQUENCE [MRNA]</scope>
    <source>
        <strain>cv. Milyang 9</strain>
        <tissue>Seedling</tissue>
    </source>
</reference>
<proteinExistence type="evidence at transcript level"/>
<sequence>MEFDTIPQEAMWQMNLRSSETMESGPYPEHPGEPDCSYYIRTGLCRFGATCRFNHPPNRKLAIATARMKGEFPERLGQPECQYYLKTGTCKFGATCRFHHPKDKAGVAGRVALNILGYPLRPNESERAYYLRTGQCKFGNTCKFHHPQPSNMVLSMRGSTVYPTVQSPTTPGQQSYAAGITNWSSSSYVPSPRWQGPSSYAPLILPQGVVSVPGWSTYGGQMGSESPQQTMRNDQTYGTSHQGELENAGLQGAYSQYRSGSVPVGFYALQRDNIFPERPDQPECQFYMKTGDCKFGAVCRFHHPRERQIPAPDCVLSPIGLPLRPGEPLCVFYSRYGICKFGPSCKFDHPMGIFTYNVASPLADTPGRRLLGSSSGTAALSLSSEGLVESGTAKPRRLSLSETRPIPPGDDNIDDEG</sequence>
<evidence type="ECO:0000250" key="1"/>
<evidence type="ECO:0000255" key="2">
    <source>
        <dbReference type="PROSITE-ProRule" id="PRU00723"/>
    </source>
</evidence>
<evidence type="ECO:0000256" key="3">
    <source>
        <dbReference type="SAM" id="MobiDB-lite"/>
    </source>
</evidence>